<sequence length="414" mass="45169">MKQYKILLIIADGLGDRPVSKLNGLTPLEAANKPAISDLLKSSMIGLMDPISPGVIPGSDTSHLSIFGLDPHVYYRGRGAFEALGAGATLKHGDVAFRGNFATVNNDLVVVDRRAGRKLEEGEELVKELNEKIKEINDVKIRFYKGTEHRVAVVLSGKGISDKVSDTDPHYEGLKVLESKPLEDSTEALRTAEIINILTRKVFDVLNSSEVNKRRIEQGEKPANIVLLRGAAHYVKLPSFSSYTKLKAAAVSATALIKGICRELGMNVVTPVGATGGIDTNYNAKAKAAIELLKENDFVFLHIKATDAASHDGLVEEKVKAIERIDKVIGTIVDNVGRDNLILMFTGDHATPVEVKEHSGDPVPILLYVPYPIINDNVKDFNEKEARKGSLRIRGLDVTNILLNYSNRAEKYGA</sequence>
<evidence type="ECO:0000255" key="1">
    <source>
        <dbReference type="HAMAP-Rule" id="MF_01402"/>
    </source>
</evidence>
<reference key="1">
    <citation type="journal article" date="2009" name="Proc. Natl. Acad. Sci. U.S.A.">
        <title>Biogeography of the Sulfolobus islandicus pan-genome.</title>
        <authorList>
            <person name="Reno M.L."/>
            <person name="Held N.L."/>
            <person name="Fields C.J."/>
            <person name="Burke P.V."/>
            <person name="Whitaker R.J."/>
        </authorList>
    </citation>
    <scope>NUCLEOTIDE SEQUENCE [LARGE SCALE GENOMIC DNA]</scope>
    <source>
        <strain>M.16.4 / Kamchatka #3</strain>
    </source>
</reference>
<name>APGM_SACI6</name>
<feature type="chain" id="PRO_1000215192" description="2,3-bisphosphoglycerate-independent phosphoglycerate mutase">
    <location>
        <begin position="1"/>
        <end position="414"/>
    </location>
</feature>
<proteinExistence type="inferred from homology"/>
<gene>
    <name evidence="1" type="primary">apgM</name>
    <name type="ordered locus">M164_1734</name>
</gene>
<dbReference type="EC" id="5.4.2.12" evidence="1"/>
<dbReference type="EMBL" id="CP001402">
    <property type="protein sequence ID" value="ACR42338.1"/>
    <property type="molecule type" value="Genomic_DNA"/>
</dbReference>
<dbReference type="RefSeq" id="WP_012711667.1">
    <property type="nucleotide sequence ID" value="NC_012726.1"/>
</dbReference>
<dbReference type="SMR" id="C4KIC4"/>
<dbReference type="KEGG" id="sid:M164_1734"/>
<dbReference type="HOGENOM" id="CLU_034906_2_0_2"/>
<dbReference type="UniPathway" id="UPA00109">
    <property type="reaction ID" value="UER00186"/>
</dbReference>
<dbReference type="Proteomes" id="UP000001479">
    <property type="component" value="Chromosome"/>
</dbReference>
<dbReference type="GO" id="GO:0046872">
    <property type="term" value="F:metal ion binding"/>
    <property type="evidence" value="ECO:0007669"/>
    <property type="project" value="InterPro"/>
</dbReference>
<dbReference type="GO" id="GO:0004619">
    <property type="term" value="F:phosphoglycerate mutase activity"/>
    <property type="evidence" value="ECO:0007669"/>
    <property type="project" value="UniProtKB-EC"/>
</dbReference>
<dbReference type="GO" id="GO:0006096">
    <property type="term" value="P:glycolytic process"/>
    <property type="evidence" value="ECO:0007669"/>
    <property type="project" value="UniProtKB-UniRule"/>
</dbReference>
<dbReference type="CDD" id="cd16011">
    <property type="entry name" value="iPGM_like"/>
    <property type="match status" value="1"/>
</dbReference>
<dbReference type="Gene3D" id="3.40.720.10">
    <property type="entry name" value="Alkaline Phosphatase, subunit A"/>
    <property type="match status" value="1"/>
</dbReference>
<dbReference type="Gene3D" id="3.30.70.2130">
    <property type="entry name" value="Metalloenzyme domain"/>
    <property type="match status" value="1"/>
</dbReference>
<dbReference type="HAMAP" id="MF_01402_A">
    <property type="entry name" value="ApgM_A"/>
    <property type="match status" value="1"/>
</dbReference>
<dbReference type="InterPro" id="IPR017850">
    <property type="entry name" value="Alkaline_phosphatase_core_sf"/>
</dbReference>
<dbReference type="InterPro" id="IPR023665">
    <property type="entry name" value="ApgAM_prokaryotes"/>
</dbReference>
<dbReference type="InterPro" id="IPR006124">
    <property type="entry name" value="Metalloenzyme"/>
</dbReference>
<dbReference type="InterPro" id="IPR004456">
    <property type="entry name" value="Pglycerate_mutase_ApgM"/>
</dbReference>
<dbReference type="InterPro" id="IPR042253">
    <property type="entry name" value="Pglycerate_mutase_ApgM_sf"/>
</dbReference>
<dbReference type="NCBIfam" id="TIGR00306">
    <property type="entry name" value="apgM"/>
    <property type="match status" value="1"/>
</dbReference>
<dbReference type="NCBIfam" id="NF003104">
    <property type="entry name" value="PRK04024.1"/>
    <property type="match status" value="1"/>
</dbReference>
<dbReference type="PANTHER" id="PTHR31209">
    <property type="entry name" value="COFACTOR-INDEPENDENT PHOSPHOGLYCERATE MUTASE"/>
    <property type="match status" value="1"/>
</dbReference>
<dbReference type="PANTHER" id="PTHR31209:SF0">
    <property type="entry name" value="METALLOENZYME DOMAIN-CONTAINING PROTEIN"/>
    <property type="match status" value="1"/>
</dbReference>
<dbReference type="Pfam" id="PF01676">
    <property type="entry name" value="Metalloenzyme"/>
    <property type="match status" value="1"/>
</dbReference>
<dbReference type="Pfam" id="PF10143">
    <property type="entry name" value="PhosphMutase"/>
    <property type="match status" value="1"/>
</dbReference>
<dbReference type="PIRSF" id="PIRSF006392">
    <property type="entry name" value="IPGAM_arch"/>
    <property type="match status" value="1"/>
</dbReference>
<dbReference type="SUPFAM" id="SSF53649">
    <property type="entry name" value="Alkaline phosphatase-like"/>
    <property type="match status" value="1"/>
</dbReference>
<protein>
    <recommendedName>
        <fullName evidence="1">2,3-bisphosphoglycerate-independent phosphoglycerate mutase</fullName>
        <shortName evidence="1">BPG-independent PGAM</shortName>
        <shortName evidence="1">Phosphoglyceromutase</shortName>
        <shortName evidence="1">aPGAM</shortName>
        <ecNumber evidence="1">5.4.2.12</ecNumber>
    </recommendedName>
</protein>
<organism>
    <name type="scientific">Saccharolobus islandicus (strain M.16.4 / Kamchatka #3)</name>
    <name type="common">Sulfolobus islandicus</name>
    <dbReference type="NCBI Taxonomy" id="426118"/>
    <lineage>
        <taxon>Archaea</taxon>
        <taxon>Thermoproteota</taxon>
        <taxon>Thermoprotei</taxon>
        <taxon>Sulfolobales</taxon>
        <taxon>Sulfolobaceae</taxon>
        <taxon>Saccharolobus</taxon>
    </lineage>
</organism>
<comment type="function">
    <text evidence="1">Catalyzes the interconversion of 2-phosphoglycerate and 3-phosphoglycerate.</text>
</comment>
<comment type="catalytic activity">
    <reaction evidence="1">
        <text>(2R)-2-phosphoglycerate = (2R)-3-phosphoglycerate</text>
        <dbReference type="Rhea" id="RHEA:15901"/>
        <dbReference type="ChEBI" id="CHEBI:58272"/>
        <dbReference type="ChEBI" id="CHEBI:58289"/>
        <dbReference type="EC" id="5.4.2.12"/>
    </reaction>
</comment>
<comment type="pathway">
    <text evidence="1">Carbohydrate degradation; glycolysis; pyruvate from D-glyceraldehyde 3-phosphate: step 3/5.</text>
</comment>
<comment type="similarity">
    <text evidence="1">Belongs to the BPG-independent phosphoglycerate mutase family. A-PGAM subfamily.</text>
</comment>
<keyword id="KW-0324">Glycolysis</keyword>
<keyword id="KW-0413">Isomerase</keyword>
<accession>C4KIC4</accession>